<name>CHEB1_GEOSL</name>
<sequence length="362" mass="38340">MLQNQTRKLRVLVVDDSSFMRMVIRSVLEKDPAIEVVGIAVDGMEGVEKALALKPDLITMDIEMPRLDGISALKQVMAKCPTRVLMVSTLTCEGAKATFDALDAGAIDYIPKNVTDSADAQRVFREELLRKVKGAASSIFGRPMTTSAPRAIIAPPRQVQPAPRPSQALAGKFHYVGIGASTGGPVALQEVLGRIPGNYPHGIVVAIHMPKAFTGPYAERLNSKCSLQIKEANDGDIIQPGVVLVAPGGRHMALARQGNSIVVRTLSTAECPQYIYIPSVDHMMTTLADATNGSALGVILTGMGSDGFKGMKHLKSKGGITIVQDEATSTIYGMPRACIEGGVADTVLPLTQIGSEIARLGG</sequence>
<feature type="chain" id="PRO_0000157996" description="Protein-glutamate methylesterase/protein-glutamine glutaminase 1">
    <location>
        <begin position="1"/>
        <end position="362"/>
    </location>
</feature>
<feature type="domain" description="Response regulatory" evidence="1">
    <location>
        <begin position="10"/>
        <end position="127"/>
    </location>
</feature>
<feature type="domain" description="CheB-type methylesterase" evidence="1">
    <location>
        <begin position="163"/>
        <end position="357"/>
    </location>
</feature>
<feature type="active site" evidence="1">
    <location>
        <position position="181"/>
    </location>
</feature>
<feature type="active site" evidence="1">
    <location>
        <position position="208"/>
    </location>
</feature>
<feature type="active site" evidence="1">
    <location>
        <position position="306"/>
    </location>
</feature>
<feature type="modified residue" description="4-aspartylphosphate" evidence="1">
    <location>
        <position position="61"/>
    </location>
</feature>
<organism>
    <name type="scientific">Geobacter sulfurreducens (strain ATCC 51573 / DSM 12127 / PCA)</name>
    <dbReference type="NCBI Taxonomy" id="243231"/>
    <lineage>
        <taxon>Bacteria</taxon>
        <taxon>Pseudomonadati</taxon>
        <taxon>Thermodesulfobacteriota</taxon>
        <taxon>Desulfuromonadia</taxon>
        <taxon>Geobacterales</taxon>
        <taxon>Geobacteraceae</taxon>
        <taxon>Geobacter</taxon>
    </lineage>
</organism>
<accession>P62638</accession>
<accession>Q74GF3</accession>
<comment type="function">
    <text evidence="1">Involved in chemotaxis. Part of a chemotaxis signal transduction system that modulates chemotaxis in response to various stimuli. Catalyzes the demethylation of specific methylglutamate residues introduced into the chemoreceptors (methyl-accepting chemotaxis proteins or MCP) by CheR. Also mediates the irreversible deamidation of specific glutamine residues to glutamic acid.</text>
</comment>
<comment type="catalytic activity">
    <reaction evidence="1">
        <text>[protein]-L-glutamate 5-O-methyl ester + H2O = L-glutamyl-[protein] + methanol + H(+)</text>
        <dbReference type="Rhea" id="RHEA:23236"/>
        <dbReference type="Rhea" id="RHEA-COMP:10208"/>
        <dbReference type="Rhea" id="RHEA-COMP:10311"/>
        <dbReference type="ChEBI" id="CHEBI:15377"/>
        <dbReference type="ChEBI" id="CHEBI:15378"/>
        <dbReference type="ChEBI" id="CHEBI:17790"/>
        <dbReference type="ChEBI" id="CHEBI:29973"/>
        <dbReference type="ChEBI" id="CHEBI:82795"/>
        <dbReference type="EC" id="3.1.1.61"/>
    </reaction>
</comment>
<comment type="catalytic activity">
    <reaction evidence="1">
        <text>L-glutaminyl-[protein] + H2O = L-glutamyl-[protein] + NH4(+)</text>
        <dbReference type="Rhea" id="RHEA:16441"/>
        <dbReference type="Rhea" id="RHEA-COMP:10207"/>
        <dbReference type="Rhea" id="RHEA-COMP:10208"/>
        <dbReference type="ChEBI" id="CHEBI:15377"/>
        <dbReference type="ChEBI" id="CHEBI:28938"/>
        <dbReference type="ChEBI" id="CHEBI:29973"/>
        <dbReference type="ChEBI" id="CHEBI:30011"/>
        <dbReference type="EC" id="3.5.1.44"/>
    </reaction>
</comment>
<comment type="subcellular location">
    <subcellularLocation>
        <location evidence="1">Cytoplasm</location>
    </subcellularLocation>
</comment>
<comment type="domain">
    <text evidence="1">Contains a C-terminal catalytic domain, and an N-terminal region which modulates catalytic activity.</text>
</comment>
<comment type="PTM">
    <text evidence="1">Phosphorylated by CheA. Phosphorylation of the N-terminal regulatory domain activates the methylesterase activity.</text>
</comment>
<comment type="similarity">
    <text evidence="1">Belongs to the CheB family.</text>
</comment>
<gene>
    <name evidence="1" type="primary">cheB1</name>
    <name type="ordered locus">GSU0293</name>
</gene>
<proteinExistence type="inferred from homology"/>
<dbReference type="EC" id="3.1.1.61" evidence="1"/>
<dbReference type="EC" id="3.5.1.44" evidence="1"/>
<dbReference type="EMBL" id="AE017180">
    <property type="protein sequence ID" value="AAR33626.1"/>
    <property type="molecule type" value="Genomic_DNA"/>
</dbReference>
<dbReference type="RefSeq" id="NP_951353.1">
    <property type="nucleotide sequence ID" value="NC_002939.5"/>
</dbReference>
<dbReference type="RefSeq" id="WP_010940965.1">
    <property type="nucleotide sequence ID" value="NC_002939.5"/>
</dbReference>
<dbReference type="SMR" id="P62638"/>
<dbReference type="STRING" id="243231.GSU0293"/>
<dbReference type="EnsemblBacteria" id="AAR33626">
    <property type="protein sequence ID" value="AAR33626"/>
    <property type="gene ID" value="GSU0293"/>
</dbReference>
<dbReference type="KEGG" id="gsu:GSU0293"/>
<dbReference type="PATRIC" id="fig|243231.5.peg.290"/>
<dbReference type="eggNOG" id="COG2201">
    <property type="taxonomic scope" value="Bacteria"/>
</dbReference>
<dbReference type="HOGENOM" id="CLU_000445_51_0_7"/>
<dbReference type="InParanoid" id="P62638"/>
<dbReference type="OrthoDB" id="9793421at2"/>
<dbReference type="Proteomes" id="UP000000577">
    <property type="component" value="Chromosome"/>
</dbReference>
<dbReference type="GO" id="GO:0005737">
    <property type="term" value="C:cytoplasm"/>
    <property type="evidence" value="ECO:0007669"/>
    <property type="project" value="UniProtKB-SubCell"/>
</dbReference>
<dbReference type="GO" id="GO:0000156">
    <property type="term" value="F:phosphorelay response regulator activity"/>
    <property type="evidence" value="ECO:0007669"/>
    <property type="project" value="InterPro"/>
</dbReference>
<dbReference type="GO" id="GO:0008984">
    <property type="term" value="F:protein-glutamate methylesterase activity"/>
    <property type="evidence" value="ECO:0007669"/>
    <property type="project" value="UniProtKB-UniRule"/>
</dbReference>
<dbReference type="GO" id="GO:0050568">
    <property type="term" value="F:protein-glutamine glutaminase activity"/>
    <property type="evidence" value="ECO:0007669"/>
    <property type="project" value="UniProtKB-UniRule"/>
</dbReference>
<dbReference type="GO" id="GO:0006935">
    <property type="term" value="P:chemotaxis"/>
    <property type="evidence" value="ECO:0007669"/>
    <property type="project" value="UniProtKB-UniRule"/>
</dbReference>
<dbReference type="CDD" id="cd16432">
    <property type="entry name" value="CheB_Rec"/>
    <property type="match status" value="1"/>
</dbReference>
<dbReference type="CDD" id="cd17541">
    <property type="entry name" value="REC_CheB-like"/>
    <property type="match status" value="1"/>
</dbReference>
<dbReference type="Gene3D" id="3.40.50.2300">
    <property type="match status" value="1"/>
</dbReference>
<dbReference type="Gene3D" id="3.40.50.180">
    <property type="entry name" value="Methylesterase CheB, C-terminal domain"/>
    <property type="match status" value="1"/>
</dbReference>
<dbReference type="HAMAP" id="MF_00099">
    <property type="entry name" value="CheB_chemtxs"/>
    <property type="match status" value="1"/>
</dbReference>
<dbReference type="InterPro" id="IPR008248">
    <property type="entry name" value="CheB-like"/>
</dbReference>
<dbReference type="InterPro" id="IPR035909">
    <property type="entry name" value="CheB_C"/>
</dbReference>
<dbReference type="InterPro" id="IPR011006">
    <property type="entry name" value="CheY-like_superfamily"/>
</dbReference>
<dbReference type="InterPro" id="IPR000673">
    <property type="entry name" value="Sig_transdc_resp-reg_Me-estase"/>
</dbReference>
<dbReference type="InterPro" id="IPR001789">
    <property type="entry name" value="Sig_transdc_resp-reg_receiver"/>
</dbReference>
<dbReference type="NCBIfam" id="NF001965">
    <property type="entry name" value="PRK00742.1"/>
    <property type="match status" value="1"/>
</dbReference>
<dbReference type="PANTHER" id="PTHR42872">
    <property type="entry name" value="PROTEIN-GLUTAMATE METHYLESTERASE/PROTEIN-GLUTAMINE GLUTAMINASE"/>
    <property type="match status" value="1"/>
</dbReference>
<dbReference type="PANTHER" id="PTHR42872:SF3">
    <property type="entry name" value="PROTEIN-GLUTAMATE METHYLESTERASE_PROTEIN-GLUTAMINE GLUTAMINASE 1"/>
    <property type="match status" value="1"/>
</dbReference>
<dbReference type="Pfam" id="PF01339">
    <property type="entry name" value="CheB_methylest"/>
    <property type="match status" value="1"/>
</dbReference>
<dbReference type="Pfam" id="PF00072">
    <property type="entry name" value="Response_reg"/>
    <property type="match status" value="1"/>
</dbReference>
<dbReference type="PIRSF" id="PIRSF000876">
    <property type="entry name" value="RR_chemtxs_CheB"/>
    <property type="match status" value="1"/>
</dbReference>
<dbReference type="SMART" id="SM00448">
    <property type="entry name" value="REC"/>
    <property type="match status" value="1"/>
</dbReference>
<dbReference type="SUPFAM" id="SSF52172">
    <property type="entry name" value="CheY-like"/>
    <property type="match status" value="1"/>
</dbReference>
<dbReference type="SUPFAM" id="SSF52738">
    <property type="entry name" value="Methylesterase CheB, C-terminal domain"/>
    <property type="match status" value="1"/>
</dbReference>
<dbReference type="PROSITE" id="PS50122">
    <property type="entry name" value="CHEB"/>
    <property type="match status" value="1"/>
</dbReference>
<dbReference type="PROSITE" id="PS50110">
    <property type="entry name" value="RESPONSE_REGULATORY"/>
    <property type="match status" value="1"/>
</dbReference>
<reference key="1">
    <citation type="journal article" date="2003" name="Science">
        <title>Genome of Geobacter sulfurreducens: metal reduction in subsurface environments.</title>
        <authorList>
            <person name="Methe B.A."/>
            <person name="Nelson K.E."/>
            <person name="Eisen J.A."/>
            <person name="Paulsen I.T."/>
            <person name="Nelson W.C."/>
            <person name="Heidelberg J.F."/>
            <person name="Wu D."/>
            <person name="Wu M."/>
            <person name="Ward N.L."/>
            <person name="Beanan M.J."/>
            <person name="Dodson R.J."/>
            <person name="Madupu R."/>
            <person name="Brinkac L.M."/>
            <person name="Daugherty S.C."/>
            <person name="DeBoy R.T."/>
            <person name="Durkin A.S."/>
            <person name="Gwinn M.L."/>
            <person name="Kolonay J.F."/>
            <person name="Sullivan S.A."/>
            <person name="Haft D.H."/>
            <person name="Selengut J."/>
            <person name="Davidsen T.M."/>
            <person name="Zafar N."/>
            <person name="White O."/>
            <person name="Tran B."/>
            <person name="Romero C."/>
            <person name="Forberger H.A."/>
            <person name="Weidman J.F."/>
            <person name="Khouri H.M."/>
            <person name="Feldblyum T.V."/>
            <person name="Utterback T.R."/>
            <person name="Van Aken S.E."/>
            <person name="Lovley D.R."/>
            <person name="Fraser C.M."/>
        </authorList>
    </citation>
    <scope>NUCLEOTIDE SEQUENCE [LARGE SCALE GENOMIC DNA]</scope>
    <source>
        <strain>ATCC 51573 / DSM 12127 / PCA</strain>
    </source>
</reference>
<evidence type="ECO:0000255" key="1">
    <source>
        <dbReference type="HAMAP-Rule" id="MF_00099"/>
    </source>
</evidence>
<keyword id="KW-0145">Chemotaxis</keyword>
<keyword id="KW-0963">Cytoplasm</keyword>
<keyword id="KW-0378">Hydrolase</keyword>
<keyword id="KW-0597">Phosphoprotein</keyword>
<keyword id="KW-1185">Reference proteome</keyword>
<protein>
    <recommendedName>
        <fullName evidence="1">Protein-glutamate methylesterase/protein-glutamine glutaminase 1</fullName>
        <ecNumber evidence="1">3.1.1.61</ecNumber>
        <ecNumber evidence="1">3.5.1.44</ecNumber>
    </recommendedName>
</protein>